<keyword id="KW-0030">Aminoacyl-tRNA synthetase</keyword>
<keyword id="KW-0067">ATP-binding</keyword>
<keyword id="KW-0963">Cytoplasm</keyword>
<keyword id="KW-0436">Ligase</keyword>
<keyword id="KW-0547">Nucleotide-binding</keyword>
<keyword id="KW-0648">Protein biosynthesis</keyword>
<keyword id="KW-1185">Reference proteome</keyword>
<organism>
    <name type="scientific">Methanococcus maripaludis (strain DSM 14266 / JCM 13030 / NBRC 101832 / S2 / LL)</name>
    <dbReference type="NCBI Taxonomy" id="267377"/>
    <lineage>
        <taxon>Archaea</taxon>
        <taxon>Methanobacteriati</taxon>
        <taxon>Methanobacteriota</taxon>
        <taxon>Methanomada group</taxon>
        <taxon>Methanococci</taxon>
        <taxon>Methanococcales</taxon>
        <taxon>Methanococcaceae</taxon>
        <taxon>Methanococcus</taxon>
    </lineage>
</organism>
<accession>Q6LZD3</accession>
<accession>Q9HHB1</accession>
<gene>
    <name evidence="1" type="primary">proS</name>
    <name type="ordered locus">MMP0696</name>
</gene>
<proteinExistence type="inferred from homology"/>
<sequence>MEFSEWYSDILEKAGIYDLRYPIKGCGVYLPYGFKIRRYSFEILRKLLDETGHDETLFPMLIPENLLAKEGEHIKGFEDEVFWVTHGGKTPLEVKLALRPTSETTMYYMMKQWIKVHTDLPLKLYQVVNTFRYETKHTRPLIRLREIMSFKEAHTAHATKKECDAQIEEALTLYKAFFDEIGVPYVISKRPEWDKFPGADYTMAFDTIYPDGKTMQIGTVHNLGQNFAKTFELEFETPDGEKDFVYQTCYGISDRAIASLISVHGDEKGLVIPVDVAPIQIVLIPLLFKGKEEIVMDKIKELNNTLKSEFRVHLDDRDIRPGRKYNDWELKGVPLRIELGPRDIENGHALIVRRDTGEKITVEYSNILEEVEKIVSMYKENLKLKAEEKVKSFITVLDFENDVNSLSEKVKAKLLENKGIILIPFNESIYNEEFEELIDASVLGLTTYEGKEYISVARTY</sequence>
<evidence type="ECO:0000255" key="1">
    <source>
        <dbReference type="HAMAP-Rule" id="MF_01571"/>
    </source>
</evidence>
<evidence type="ECO:0000305" key="2"/>
<name>SYP_METMP</name>
<protein>
    <recommendedName>
        <fullName evidence="1">Proline--tRNA ligase</fullName>
        <ecNumber evidence="1">6.1.1.15</ecNumber>
    </recommendedName>
    <alternativeName>
        <fullName evidence="1">Prolyl-tRNA synthetase</fullName>
        <shortName evidence="1">ProRS</shortName>
    </alternativeName>
</protein>
<feature type="chain" id="PRO_0000249158" description="Proline--tRNA ligase">
    <location>
        <begin position="1"/>
        <end position="460"/>
    </location>
</feature>
<feature type="sequence conflict" description="In Ref. 1; AAG28517." evidence="2" ref="1">
    <original>N</original>
    <variation>K</variation>
    <location>
        <position position="304"/>
    </location>
</feature>
<feature type="sequence conflict" description="In Ref. 1; AAG28517." evidence="2" ref="1">
    <original>E</original>
    <variation>D</variation>
    <location>
        <position position="380"/>
    </location>
</feature>
<feature type="sequence conflict" description="In Ref. 1; AAG28517." evidence="2" ref="1">
    <original>L</original>
    <variation>I</variation>
    <location>
        <position position="384"/>
    </location>
</feature>
<feature type="sequence conflict" description="In Ref. 1; AAG28517." evidence="2" ref="1">
    <original>V</original>
    <variation>I</variation>
    <location>
        <position position="390"/>
    </location>
</feature>
<feature type="sequence conflict" description="In Ref. 1; AAG28517." evidence="2" ref="1">
    <original>L</original>
    <variation>V</variation>
    <location>
        <position position="397"/>
    </location>
</feature>
<feature type="sequence conflict" description="In Ref. 1; AAG28517." evidence="2" ref="1">
    <original>N</original>
    <variation>S</variation>
    <location>
        <position position="401"/>
    </location>
</feature>
<feature type="sequence conflict" description="In Ref. 1; AAG28517." evidence="2" ref="1">
    <original>S</original>
    <variation>A</variation>
    <location>
        <position position="405"/>
    </location>
</feature>
<feature type="sequence conflict" description="In Ref. 1; AAG28517." evidence="2" ref="1">
    <original>K</original>
    <variation>E</variation>
    <location>
        <position position="413"/>
    </location>
</feature>
<feature type="sequence conflict" description="In Ref. 1; AAG28517." evidence="2" ref="1">
    <original>N</original>
    <variation>E</variation>
    <location>
        <position position="426"/>
    </location>
</feature>
<comment type="function">
    <text evidence="1">Catalyzes the attachment of proline to tRNA(Pro) in a two-step reaction: proline is first activated by ATP to form Pro-AMP and then transferred to the acceptor end of tRNA(Pro).</text>
</comment>
<comment type="catalytic activity">
    <reaction evidence="1">
        <text>tRNA(Pro) + L-proline + ATP = L-prolyl-tRNA(Pro) + AMP + diphosphate</text>
        <dbReference type="Rhea" id="RHEA:14305"/>
        <dbReference type="Rhea" id="RHEA-COMP:9700"/>
        <dbReference type="Rhea" id="RHEA-COMP:9702"/>
        <dbReference type="ChEBI" id="CHEBI:30616"/>
        <dbReference type="ChEBI" id="CHEBI:33019"/>
        <dbReference type="ChEBI" id="CHEBI:60039"/>
        <dbReference type="ChEBI" id="CHEBI:78442"/>
        <dbReference type="ChEBI" id="CHEBI:78532"/>
        <dbReference type="ChEBI" id="CHEBI:456215"/>
        <dbReference type="EC" id="6.1.1.15"/>
    </reaction>
</comment>
<comment type="subunit">
    <text evidence="1">Homodimer.</text>
</comment>
<comment type="subcellular location">
    <subcellularLocation>
        <location evidence="1">Cytoplasm</location>
    </subcellularLocation>
</comment>
<comment type="domain">
    <text evidence="1">Consists of three domains: the N-terminal catalytic domain, the anticodon-binding domain and the C-terminal extension.</text>
</comment>
<comment type="similarity">
    <text evidence="1">Belongs to the class-II aminoacyl-tRNA synthetase family. ProS type 3 subfamily.</text>
</comment>
<reference key="1">
    <citation type="submission" date="1999-10" db="EMBL/GenBank/DDBJ databases">
        <title>A single class II synthetase specifies two amino acids in archaeal translation.</title>
        <authorList>
            <person name="Stathopoulos C."/>
            <person name="Li T."/>
            <person name="Longman R."/>
            <person name="Vothknecht U.C."/>
            <person name="Becker H.D."/>
            <person name="Ibba M."/>
            <person name="Soell D."/>
        </authorList>
    </citation>
    <scope>NUCLEOTIDE SEQUENCE [GENOMIC DNA]</scope>
</reference>
<reference key="2">
    <citation type="journal article" date="2004" name="J. Bacteriol.">
        <title>Complete genome sequence of the genetically tractable hydrogenotrophic methanogen Methanococcus maripaludis.</title>
        <authorList>
            <person name="Hendrickson E.L."/>
            <person name="Kaul R."/>
            <person name="Zhou Y."/>
            <person name="Bovee D."/>
            <person name="Chapman P."/>
            <person name="Chung J."/>
            <person name="Conway de Macario E."/>
            <person name="Dodsworth J.A."/>
            <person name="Gillett W."/>
            <person name="Graham D.E."/>
            <person name="Hackett M."/>
            <person name="Haydock A.K."/>
            <person name="Kang A."/>
            <person name="Land M.L."/>
            <person name="Levy R."/>
            <person name="Lie T.J."/>
            <person name="Major T.A."/>
            <person name="Moore B.C."/>
            <person name="Porat I."/>
            <person name="Palmeiri A."/>
            <person name="Rouse G."/>
            <person name="Saenphimmachak C."/>
            <person name="Soell D."/>
            <person name="Van Dien S."/>
            <person name="Wang T."/>
            <person name="Whitman W.B."/>
            <person name="Xia Q."/>
            <person name="Zhang Y."/>
            <person name="Larimer F.W."/>
            <person name="Olson M.V."/>
            <person name="Leigh J.A."/>
        </authorList>
    </citation>
    <scope>NUCLEOTIDE SEQUENCE [LARGE SCALE GENOMIC DNA]</scope>
    <source>
        <strain>DSM 14266 / JCM 13030 / NBRC 101832 / S2 / LL</strain>
    </source>
</reference>
<dbReference type="EC" id="6.1.1.15" evidence="1"/>
<dbReference type="EMBL" id="AF197899">
    <property type="protein sequence ID" value="AAG28517.1"/>
    <property type="molecule type" value="Genomic_DNA"/>
</dbReference>
<dbReference type="EMBL" id="BX950229">
    <property type="protein sequence ID" value="CAF30252.1"/>
    <property type="molecule type" value="Genomic_DNA"/>
</dbReference>
<dbReference type="RefSeq" id="WP_011170640.1">
    <property type="nucleotide sequence ID" value="NC_005791.1"/>
</dbReference>
<dbReference type="SMR" id="Q6LZD3"/>
<dbReference type="STRING" id="267377.MMP0696"/>
<dbReference type="EnsemblBacteria" id="CAF30252">
    <property type="protein sequence ID" value="CAF30252"/>
    <property type="gene ID" value="MMP0696"/>
</dbReference>
<dbReference type="GeneID" id="41279165"/>
<dbReference type="KEGG" id="mmp:MMP0696"/>
<dbReference type="PATRIC" id="fig|267377.15.peg.713"/>
<dbReference type="eggNOG" id="arCOG00402">
    <property type="taxonomic scope" value="Archaea"/>
</dbReference>
<dbReference type="HOGENOM" id="CLU_001882_4_2_2"/>
<dbReference type="OrthoDB" id="7375at2157"/>
<dbReference type="BRENDA" id="6.1.1.15">
    <property type="organism ID" value="3262"/>
</dbReference>
<dbReference type="Proteomes" id="UP000000590">
    <property type="component" value="Chromosome"/>
</dbReference>
<dbReference type="GO" id="GO:0017101">
    <property type="term" value="C:aminoacyl-tRNA synthetase multienzyme complex"/>
    <property type="evidence" value="ECO:0007669"/>
    <property type="project" value="TreeGrafter"/>
</dbReference>
<dbReference type="GO" id="GO:0005737">
    <property type="term" value="C:cytoplasm"/>
    <property type="evidence" value="ECO:0007669"/>
    <property type="project" value="UniProtKB-SubCell"/>
</dbReference>
<dbReference type="GO" id="GO:0005524">
    <property type="term" value="F:ATP binding"/>
    <property type="evidence" value="ECO:0007669"/>
    <property type="project" value="UniProtKB-UniRule"/>
</dbReference>
<dbReference type="GO" id="GO:0004827">
    <property type="term" value="F:proline-tRNA ligase activity"/>
    <property type="evidence" value="ECO:0007669"/>
    <property type="project" value="UniProtKB-UniRule"/>
</dbReference>
<dbReference type="GO" id="GO:0006433">
    <property type="term" value="P:prolyl-tRNA aminoacylation"/>
    <property type="evidence" value="ECO:0007669"/>
    <property type="project" value="UniProtKB-UniRule"/>
</dbReference>
<dbReference type="CDD" id="cd00778">
    <property type="entry name" value="ProRS_core_arch_euk"/>
    <property type="match status" value="1"/>
</dbReference>
<dbReference type="FunFam" id="3.30.930.10:FF:000037">
    <property type="entry name" value="Proline--tRNA ligase"/>
    <property type="match status" value="1"/>
</dbReference>
<dbReference type="Gene3D" id="3.40.50.800">
    <property type="entry name" value="Anticodon-binding domain"/>
    <property type="match status" value="1"/>
</dbReference>
<dbReference type="Gene3D" id="3.30.930.10">
    <property type="entry name" value="Bira Bifunctional Protein, Domain 2"/>
    <property type="match status" value="1"/>
</dbReference>
<dbReference type="Gene3D" id="3.30.110.30">
    <property type="entry name" value="C-terminal domain of ProRS"/>
    <property type="match status" value="1"/>
</dbReference>
<dbReference type="HAMAP" id="MF_01571">
    <property type="entry name" value="Pro_tRNA_synth_type3"/>
    <property type="match status" value="1"/>
</dbReference>
<dbReference type="InterPro" id="IPR002314">
    <property type="entry name" value="aa-tRNA-synt_IIb"/>
</dbReference>
<dbReference type="InterPro" id="IPR006195">
    <property type="entry name" value="aa-tRNA-synth_II"/>
</dbReference>
<dbReference type="InterPro" id="IPR045864">
    <property type="entry name" value="aa-tRNA-synth_II/BPL/LPL"/>
</dbReference>
<dbReference type="InterPro" id="IPR004154">
    <property type="entry name" value="Anticodon-bd"/>
</dbReference>
<dbReference type="InterPro" id="IPR036621">
    <property type="entry name" value="Anticodon-bd_dom_sf"/>
</dbReference>
<dbReference type="InterPro" id="IPR002316">
    <property type="entry name" value="Pro-tRNA-ligase_IIa"/>
</dbReference>
<dbReference type="InterPro" id="IPR004499">
    <property type="entry name" value="Pro-tRNA-ligase_IIa_arc-type"/>
</dbReference>
<dbReference type="InterPro" id="IPR017449">
    <property type="entry name" value="Pro-tRNA_synth_II"/>
</dbReference>
<dbReference type="InterPro" id="IPR015264">
    <property type="entry name" value="Pro-tRNA_synth_II_arc"/>
</dbReference>
<dbReference type="InterPro" id="IPR033721">
    <property type="entry name" value="ProRS_core_arch_euk"/>
</dbReference>
<dbReference type="NCBIfam" id="TIGR00408">
    <property type="entry name" value="proS_fam_I"/>
    <property type="match status" value="1"/>
</dbReference>
<dbReference type="PANTHER" id="PTHR43382:SF2">
    <property type="entry name" value="BIFUNCTIONAL GLUTAMATE_PROLINE--TRNA LIGASE"/>
    <property type="match status" value="1"/>
</dbReference>
<dbReference type="PANTHER" id="PTHR43382">
    <property type="entry name" value="PROLYL-TRNA SYNTHETASE"/>
    <property type="match status" value="1"/>
</dbReference>
<dbReference type="Pfam" id="PF03129">
    <property type="entry name" value="HGTP_anticodon"/>
    <property type="match status" value="1"/>
</dbReference>
<dbReference type="Pfam" id="PF09181">
    <property type="entry name" value="ProRS-C_2"/>
    <property type="match status" value="1"/>
</dbReference>
<dbReference type="Pfam" id="PF00587">
    <property type="entry name" value="tRNA-synt_2b"/>
    <property type="match status" value="1"/>
</dbReference>
<dbReference type="PRINTS" id="PR01046">
    <property type="entry name" value="TRNASYNTHPRO"/>
</dbReference>
<dbReference type="SUPFAM" id="SSF64586">
    <property type="entry name" value="C-terminal domain of ProRS"/>
    <property type="match status" value="1"/>
</dbReference>
<dbReference type="SUPFAM" id="SSF52954">
    <property type="entry name" value="Class II aaRS ABD-related"/>
    <property type="match status" value="1"/>
</dbReference>
<dbReference type="SUPFAM" id="SSF55681">
    <property type="entry name" value="Class II aaRS and biotin synthetases"/>
    <property type="match status" value="1"/>
</dbReference>
<dbReference type="PROSITE" id="PS50862">
    <property type="entry name" value="AA_TRNA_LIGASE_II"/>
    <property type="match status" value="1"/>
</dbReference>